<proteinExistence type="inferred from homology"/>
<reference key="1">
    <citation type="journal article" date="2002" name="Proc. Natl. Acad. Sci. U.S.A.">
        <title>Genome sequence of the hyperthermophilic crenarchaeon Pyrobaculum aerophilum.</title>
        <authorList>
            <person name="Fitz-Gibbon S.T."/>
            <person name="Ladner H."/>
            <person name="Kim U.-J."/>
            <person name="Stetter K.O."/>
            <person name="Simon M.I."/>
            <person name="Miller J.H."/>
        </authorList>
    </citation>
    <scope>NUCLEOTIDE SEQUENCE [LARGE SCALE GENOMIC DNA]</scope>
    <source>
        <strain>ATCC 51768 / DSM 7523 / JCM 9630 / CIP 104966 / NBRC 100827 / IM2</strain>
    </source>
</reference>
<protein>
    <recommendedName>
        <fullName evidence="1">Phosphate import ATP-binding protein PstB</fullName>
        <ecNumber evidence="1">7.3.2.1</ecNumber>
    </recommendedName>
    <alternativeName>
        <fullName evidence="1">ABC phosphate transporter</fullName>
    </alternativeName>
    <alternativeName>
        <fullName evidence="1">Phosphate-transporting ATPase</fullName>
    </alternativeName>
</protein>
<accession>Q8ZX91</accession>
<evidence type="ECO:0000255" key="1">
    <source>
        <dbReference type="HAMAP-Rule" id="MF_01702"/>
    </source>
</evidence>
<keyword id="KW-0067">ATP-binding</keyword>
<keyword id="KW-1003">Cell membrane</keyword>
<keyword id="KW-0472">Membrane</keyword>
<keyword id="KW-0547">Nucleotide-binding</keyword>
<keyword id="KW-0592">Phosphate transport</keyword>
<keyword id="KW-1185">Reference proteome</keyword>
<keyword id="KW-1278">Translocase</keyword>
<keyword id="KW-0813">Transport</keyword>
<feature type="chain" id="PRO_0000092951" description="Phosphate import ATP-binding protein PstB">
    <location>
        <begin position="1"/>
        <end position="250"/>
    </location>
</feature>
<feature type="domain" description="ABC transporter" evidence="1">
    <location>
        <begin position="4"/>
        <end position="245"/>
    </location>
</feature>
<feature type="binding site" evidence="1">
    <location>
        <begin position="36"/>
        <end position="43"/>
    </location>
    <ligand>
        <name>ATP</name>
        <dbReference type="ChEBI" id="CHEBI:30616"/>
    </ligand>
</feature>
<name>PSTB_PYRAE</name>
<sequence>MAKLTARDLKLSFGNVEVLKGVNLEIKERTITALMGPSGSGKSTLLRVFNRLIELYPEARVSGEVLLDGQDVFKMDVIELRRRVQMIFQIPNPIPNLSIFENVALGLKLNRIVKSKKELEARVRQALEKAQLWDEVKNRLDAPAGKLSGGQQQRLCVARALAFDPEVLLADEPTANLDPENTAKLESLFLELKKDMTIVLVTHFPAQAARVSDYVAFLYKGQIVEVGPTKEVFTNPRHELTEKYVTGKLY</sequence>
<organism>
    <name type="scientific">Pyrobaculum aerophilum (strain ATCC 51768 / DSM 7523 / JCM 9630 / CIP 104966 / NBRC 100827 / IM2)</name>
    <dbReference type="NCBI Taxonomy" id="178306"/>
    <lineage>
        <taxon>Archaea</taxon>
        <taxon>Thermoproteota</taxon>
        <taxon>Thermoprotei</taxon>
        <taxon>Thermoproteales</taxon>
        <taxon>Thermoproteaceae</taxon>
        <taxon>Pyrobaculum</taxon>
    </lineage>
</organism>
<dbReference type="EC" id="7.3.2.1" evidence="1"/>
<dbReference type="EMBL" id="AE009441">
    <property type="protein sequence ID" value="AAL63458.1"/>
    <property type="molecule type" value="Genomic_DNA"/>
</dbReference>
<dbReference type="RefSeq" id="WP_011007931.1">
    <property type="nucleotide sequence ID" value="NC_003364.1"/>
</dbReference>
<dbReference type="SMR" id="Q8ZX91"/>
<dbReference type="FunCoup" id="Q8ZX91">
    <property type="interactions" value="36"/>
</dbReference>
<dbReference type="STRING" id="178306.PAE1393"/>
<dbReference type="EnsemblBacteria" id="AAL63458">
    <property type="protein sequence ID" value="AAL63458"/>
    <property type="gene ID" value="PAE1393"/>
</dbReference>
<dbReference type="GeneID" id="1465697"/>
<dbReference type="KEGG" id="pai:PAE1393"/>
<dbReference type="PATRIC" id="fig|178306.9.peg.1034"/>
<dbReference type="eggNOG" id="arCOG00231">
    <property type="taxonomic scope" value="Archaea"/>
</dbReference>
<dbReference type="HOGENOM" id="CLU_000604_1_22_2"/>
<dbReference type="InParanoid" id="Q8ZX91"/>
<dbReference type="Proteomes" id="UP000002439">
    <property type="component" value="Chromosome"/>
</dbReference>
<dbReference type="GO" id="GO:0005886">
    <property type="term" value="C:plasma membrane"/>
    <property type="evidence" value="ECO:0007669"/>
    <property type="project" value="UniProtKB-SubCell"/>
</dbReference>
<dbReference type="GO" id="GO:0005524">
    <property type="term" value="F:ATP binding"/>
    <property type="evidence" value="ECO:0007669"/>
    <property type="project" value="UniProtKB-KW"/>
</dbReference>
<dbReference type="GO" id="GO:0016887">
    <property type="term" value="F:ATP hydrolysis activity"/>
    <property type="evidence" value="ECO:0007669"/>
    <property type="project" value="InterPro"/>
</dbReference>
<dbReference type="GO" id="GO:0015415">
    <property type="term" value="F:ATPase-coupled phosphate ion transmembrane transporter activity"/>
    <property type="evidence" value="ECO:0007669"/>
    <property type="project" value="UniProtKB-EC"/>
</dbReference>
<dbReference type="GO" id="GO:0035435">
    <property type="term" value="P:phosphate ion transmembrane transport"/>
    <property type="evidence" value="ECO:0007669"/>
    <property type="project" value="InterPro"/>
</dbReference>
<dbReference type="CDD" id="cd03260">
    <property type="entry name" value="ABC_PstB_phosphate_transporter"/>
    <property type="match status" value="1"/>
</dbReference>
<dbReference type="Gene3D" id="3.40.50.300">
    <property type="entry name" value="P-loop containing nucleotide triphosphate hydrolases"/>
    <property type="match status" value="1"/>
</dbReference>
<dbReference type="InterPro" id="IPR003593">
    <property type="entry name" value="AAA+_ATPase"/>
</dbReference>
<dbReference type="InterPro" id="IPR003439">
    <property type="entry name" value="ABC_transporter-like_ATP-bd"/>
</dbReference>
<dbReference type="InterPro" id="IPR017871">
    <property type="entry name" value="ABC_transporter-like_CS"/>
</dbReference>
<dbReference type="InterPro" id="IPR027417">
    <property type="entry name" value="P-loop_NTPase"/>
</dbReference>
<dbReference type="InterPro" id="IPR005670">
    <property type="entry name" value="PstB-like"/>
</dbReference>
<dbReference type="PANTHER" id="PTHR43423">
    <property type="entry name" value="ABC TRANSPORTER I FAMILY MEMBER 17"/>
    <property type="match status" value="1"/>
</dbReference>
<dbReference type="PANTHER" id="PTHR43423:SF1">
    <property type="entry name" value="ABC TRANSPORTER I FAMILY MEMBER 17"/>
    <property type="match status" value="1"/>
</dbReference>
<dbReference type="Pfam" id="PF00005">
    <property type="entry name" value="ABC_tran"/>
    <property type="match status" value="1"/>
</dbReference>
<dbReference type="SMART" id="SM00382">
    <property type="entry name" value="AAA"/>
    <property type="match status" value="1"/>
</dbReference>
<dbReference type="SUPFAM" id="SSF52540">
    <property type="entry name" value="P-loop containing nucleoside triphosphate hydrolases"/>
    <property type="match status" value="1"/>
</dbReference>
<dbReference type="PROSITE" id="PS00211">
    <property type="entry name" value="ABC_TRANSPORTER_1"/>
    <property type="match status" value="1"/>
</dbReference>
<dbReference type="PROSITE" id="PS50893">
    <property type="entry name" value="ABC_TRANSPORTER_2"/>
    <property type="match status" value="1"/>
</dbReference>
<dbReference type="PROSITE" id="PS51238">
    <property type="entry name" value="PSTB"/>
    <property type="match status" value="1"/>
</dbReference>
<gene>
    <name evidence="1" type="primary">pstB</name>
    <name type="ordered locus">PAE1393</name>
</gene>
<comment type="function">
    <text evidence="1">Part of the ABC transporter complex PstSACB involved in phosphate import. Responsible for energy coupling to the transport system.</text>
</comment>
<comment type="catalytic activity">
    <reaction evidence="1">
        <text>phosphate(out) + ATP + H2O = ADP + 2 phosphate(in) + H(+)</text>
        <dbReference type="Rhea" id="RHEA:24440"/>
        <dbReference type="ChEBI" id="CHEBI:15377"/>
        <dbReference type="ChEBI" id="CHEBI:15378"/>
        <dbReference type="ChEBI" id="CHEBI:30616"/>
        <dbReference type="ChEBI" id="CHEBI:43474"/>
        <dbReference type="ChEBI" id="CHEBI:456216"/>
        <dbReference type="EC" id="7.3.2.1"/>
    </reaction>
</comment>
<comment type="subunit">
    <text evidence="1">The complex is composed of two ATP-binding proteins (PstB), two transmembrane proteins (PstC and PstA) and a solute-binding protein (PstS).</text>
</comment>
<comment type="subcellular location">
    <subcellularLocation>
        <location evidence="1">Cell membrane</location>
        <topology evidence="1">Peripheral membrane protein</topology>
    </subcellularLocation>
</comment>
<comment type="similarity">
    <text evidence="1">Belongs to the ABC transporter superfamily. Phosphate importer (TC 3.A.1.7) family.</text>
</comment>